<proteinExistence type="inferred from homology"/>
<keyword id="KW-0325">Glycoprotein</keyword>
<keyword id="KW-1017">Isopeptide bond</keyword>
<keyword id="KW-0472">Membrane</keyword>
<keyword id="KW-0597">Phosphoprotein</keyword>
<keyword id="KW-0812">Transmembrane</keyword>
<keyword id="KW-1133">Transmembrane helix</keyword>
<keyword id="KW-0832">Ubl conjugation</keyword>
<keyword id="KW-0926">Vacuole</keyword>
<sequence length="636" mass="67403">MNSNSTIGRTTLGESDTISLSFSEPSSSLNSRSTDVVFASTSTLVPQQGSLTSLPPVSSTATPTYYSTSLTYDETLHTSIDVSSTSTLVSSTDSSSSSEQDTYSSQYDPATSSYSIITPSMSIFSSTSPMSSSSSITSEWSSLTSTTPTLSSSATSLSSSWSSLSSPSSLLVSSSLSLSLSSSYSDTKLFSFDSRSSIFSPSTPTVISPSYTYLSSISATSFQITTTSELSSSWFSTISSPSTTSNKDTTFPSSSRNTSTSFYSSSLSSTNDFSTISKSSKLSPSASSSTVSISTISVPTSSSVSSSSSKVPSNRPSSSSSSDDTTSAYSSTYTFQSLQSTTSSSIPPTTQTPSTSTISTSPIPTSSQVFNTVAISSSEDSKTIYYFYTQTYDITDSSTTFVTGLPTTIAVAKSEVTSFSAPSSTITADMSFYQHWLDGSLDNNKNQGTSKTNTGTIVGSVVGSVGGILICVLVVWFMLVRKRKAKRHFKENDSFCHEIGRRTGFPTTAQAKEASLQAQDSGSQQRNTETASANNPFSNEFNFKARGNPPPVPPPRNVTAMNGSFQNMRSNFMDQENRFSYGSSFTYSSLGSSTQGGFSTLSSNSIRLGRGLDNDISHDERNTVQNNSQGFLREII</sequence>
<name>TDA7_YEAS7</name>
<feature type="chain" id="PRO_0000410749" description="Topoisomerase I damage affected protein 7">
    <location>
        <begin position="1"/>
        <end position="636"/>
    </location>
</feature>
<feature type="transmembrane region" description="Helical" evidence="3">
    <location>
        <begin position="457"/>
        <end position="477"/>
    </location>
</feature>
<feature type="region of interest" description="Disordered" evidence="4">
    <location>
        <begin position="1"/>
        <end position="33"/>
    </location>
</feature>
<feature type="region of interest" description="Disordered" evidence="4">
    <location>
        <begin position="87"/>
        <end position="109"/>
    </location>
</feature>
<feature type="region of interest" description="Disordered" evidence="4">
    <location>
        <begin position="238"/>
        <end position="271"/>
    </location>
</feature>
<feature type="region of interest" description="Disordered" evidence="4">
    <location>
        <begin position="299"/>
        <end position="326"/>
    </location>
</feature>
<feature type="region of interest" description="Disordered" evidence="4">
    <location>
        <begin position="339"/>
        <end position="362"/>
    </location>
</feature>
<feature type="region of interest" description="Disordered" evidence="4">
    <location>
        <begin position="510"/>
        <end position="551"/>
    </location>
</feature>
<feature type="compositionally biased region" description="Polar residues" evidence="4">
    <location>
        <begin position="1"/>
        <end position="18"/>
    </location>
</feature>
<feature type="compositionally biased region" description="Low complexity" evidence="4">
    <location>
        <begin position="19"/>
        <end position="33"/>
    </location>
</feature>
<feature type="compositionally biased region" description="Low complexity" evidence="4">
    <location>
        <begin position="87"/>
        <end position="108"/>
    </location>
</feature>
<feature type="compositionally biased region" description="Polar residues" evidence="4">
    <location>
        <begin position="510"/>
        <end position="541"/>
    </location>
</feature>
<feature type="modified residue" description="Phosphoserine" evidence="2">
    <location>
        <position position="628"/>
    </location>
</feature>
<feature type="glycosylation site" description="N-linked (GlcNAc...) asparagine" evidence="3">
    <location>
        <position position="4"/>
    </location>
</feature>
<feature type="glycosylation site" description="N-linked (GlcNAc...) asparagine" evidence="3">
    <location>
        <position position="257"/>
    </location>
</feature>
<feature type="glycosylation site" description="N-linked (GlcNAc...) asparagine" evidence="3">
    <location>
        <position position="492"/>
    </location>
</feature>
<feature type="glycosylation site" description="N-linked (GlcNAc...) asparagine" evidence="3">
    <location>
        <position position="557"/>
    </location>
</feature>
<feature type="glycosylation site" description="N-linked (GlcNAc...) asparagine" evidence="3">
    <location>
        <position position="562"/>
    </location>
</feature>
<feature type="glycosylation site" description="N-linked (GlcNAc...) asparagine" evidence="3">
    <location>
        <position position="626"/>
    </location>
</feature>
<feature type="cross-link" description="Glycyl lysine isopeptide (Lys-Gly) (interchain with G-Cter in ubiquitin)" evidence="2">
    <location>
        <position position="512"/>
    </location>
</feature>
<organism>
    <name type="scientific">Saccharomyces cerevisiae (strain YJM789)</name>
    <name type="common">Baker's yeast</name>
    <dbReference type="NCBI Taxonomy" id="307796"/>
    <lineage>
        <taxon>Eukaryota</taxon>
        <taxon>Fungi</taxon>
        <taxon>Dikarya</taxon>
        <taxon>Ascomycota</taxon>
        <taxon>Saccharomycotina</taxon>
        <taxon>Saccharomycetes</taxon>
        <taxon>Saccharomycetales</taxon>
        <taxon>Saccharomycetaceae</taxon>
        <taxon>Saccharomyces</taxon>
    </lineage>
</organism>
<dbReference type="EMBL" id="AAFW02000067">
    <property type="protein sequence ID" value="EDN62641.1"/>
    <property type="molecule type" value="Genomic_DNA"/>
</dbReference>
<dbReference type="SMR" id="A6ZRQ9"/>
<dbReference type="GlyCosmos" id="A6ZRQ9">
    <property type="glycosylation" value="6 sites, No reported glycans"/>
</dbReference>
<dbReference type="HOGENOM" id="CLU_029057_0_0_1"/>
<dbReference type="Proteomes" id="UP000007060">
    <property type="component" value="Unassembled WGS sequence"/>
</dbReference>
<dbReference type="GO" id="GO:0005774">
    <property type="term" value="C:vacuolar membrane"/>
    <property type="evidence" value="ECO:0007669"/>
    <property type="project" value="UniProtKB-SubCell"/>
</dbReference>
<reference key="1">
    <citation type="journal article" date="2007" name="Proc. Natl. Acad. Sci. U.S.A.">
        <title>Genome sequencing and comparative analysis of Saccharomyces cerevisiae strain YJM789.</title>
        <authorList>
            <person name="Wei W."/>
            <person name="McCusker J.H."/>
            <person name="Hyman R.W."/>
            <person name="Jones T."/>
            <person name="Ning Y."/>
            <person name="Cao Z."/>
            <person name="Gu Z."/>
            <person name="Bruno D."/>
            <person name="Miranda M."/>
            <person name="Nguyen M."/>
            <person name="Wilhelmy J."/>
            <person name="Komp C."/>
            <person name="Tamse R."/>
            <person name="Wang X."/>
            <person name="Jia P."/>
            <person name="Luedi P."/>
            <person name="Oefner P.J."/>
            <person name="David L."/>
            <person name="Dietrich F.S."/>
            <person name="Li Y."/>
            <person name="Davis R.W."/>
            <person name="Steinmetz L.M."/>
        </authorList>
    </citation>
    <scope>NUCLEOTIDE SEQUENCE [LARGE SCALE GENOMIC DNA]</scope>
    <source>
        <strain>YJM789</strain>
    </source>
</reference>
<gene>
    <name type="primary">TDA7</name>
    <name type="ORF">SCY_4620</name>
</gene>
<accession>A6ZRQ9</accession>
<evidence type="ECO:0000250" key="1"/>
<evidence type="ECO:0000250" key="2">
    <source>
        <dbReference type="UniProtKB" id="P53882"/>
    </source>
</evidence>
<evidence type="ECO:0000255" key="3"/>
<evidence type="ECO:0000256" key="4">
    <source>
        <dbReference type="SAM" id="MobiDB-lite"/>
    </source>
</evidence>
<evidence type="ECO:0000305" key="5"/>
<comment type="subcellular location">
    <subcellularLocation>
        <location evidence="1">Vacuole membrane</location>
        <topology evidence="1">Single-pass membrane protein</topology>
    </subcellularLocation>
</comment>
<comment type="similarity">
    <text evidence="5">Belongs to the TDA7 family.</text>
</comment>
<protein>
    <recommendedName>
        <fullName>Topoisomerase I damage affected protein 7</fullName>
    </recommendedName>
</protein>